<feature type="chain" id="PRO_0000264214" description="Transcriptional repressor NrdR">
    <location>
        <begin position="1"/>
        <end position="155"/>
    </location>
</feature>
<feature type="domain" description="ATP-cone" evidence="1">
    <location>
        <begin position="49"/>
        <end position="139"/>
    </location>
</feature>
<feature type="zinc finger region" evidence="1">
    <location>
        <begin position="3"/>
        <end position="34"/>
    </location>
</feature>
<feature type="region of interest" description="Disordered" evidence="2">
    <location>
        <begin position="1"/>
        <end position="24"/>
    </location>
</feature>
<feature type="compositionally biased region" description="Basic and acidic residues" evidence="2">
    <location>
        <begin position="7"/>
        <end position="24"/>
    </location>
</feature>
<comment type="function">
    <text evidence="1">Negatively regulates transcription of bacterial ribonucleotide reductase nrd genes and operons by binding to NrdR-boxes.</text>
</comment>
<comment type="cofactor">
    <cofactor evidence="1">
        <name>Zn(2+)</name>
        <dbReference type="ChEBI" id="CHEBI:29105"/>
    </cofactor>
    <text evidence="1">Binds 1 zinc ion.</text>
</comment>
<comment type="similarity">
    <text evidence="1">Belongs to the NrdR family.</text>
</comment>
<proteinExistence type="inferred from homology"/>
<keyword id="KW-0067">ATP-binding</keyword>
<keyword id="KW-0238">DNA-binding</keyword>
<keyword id="KW-0479">Metal-binding</keyword>
<keyword id="KW-0547">Nucleotide-binding</keyword>
<keyword id="KW-1185">Reference proteome</keyword>
<keyword id="KW-0678">Repressor</keyword>
<keyword id="KW-0804">Transcription</keyword>
<keyword id="KW-0805">Transcription regulation</keyword>
<keyword id="KW-0862">Zinc</keyword>
<keyword id="KW-0863">Zinc-finger</keyword>
<gene>
    <name evidence="1" type="primary">nrdR</name>
    <name type="ordered locus">Sala_0789</name>
</gene>
<name>NRDR_SPHAL</name>
<accession>Q1GV13</accession>
<dbReference type="EMBL" id="CP000356">
    <property type="protein sequence ID" value="ABF52509.1"/>
    <property type="molecule type" value="Genomic_DNA"/>
</dbReference>
<dbReference type="RefSeq" id="WP_011541099.1">
    <property type="nucleotide sequence ID" value="NC_008048.1"/>
</dbReference>
<dbReference type="SMR" id="Q1GV13"/>
<dbReference type="STRING" id="317655.Sala_0789"/>
<dbReference type="KEGG" id="sal:Sala_0789"/>
<dbReference type="eggNOG" id="COG1327">
    <property type="taxonomic scope" value="Bacteria"/>
</dbReference>
<dbReference type="HOGENOM" id="CLU_108412_0_1_5"/>
<dbReference type="OrthoDB" id="9807461at2"/>
<dbReference type="Proteomes" id="UP000006578">
    <property type="component" value="Chromosome"/>
</dbReference>
<dbReference type="GO" id="GO:0005524">
    <property type="term" value="F:ATP binding"/>
    <property type="evidence" value="ECO:0007669"/>
    <property type="project" value="UniProtKB-KW"/>
</dbReference>
<dbReference type="GO" id="GO:0003677">
    <property type="term" value="F:DNA binding"/>
    <property type="evidence" value="ECO:0007669"/>
    <property type="project" value="UniProtKB-KW"/>
</dbReference>
<dbReference type="GO" id="GO:0008270">
    <property type="term" value="F:zinc ion binding"/>
    <property type="evidence" value="ECO:0007669"/>
    <property type="project" value="UniProtKB-UniRule"/>
</dbReference>
<dbReference type="GO" id="GO:0045892">
    <property type="term" value="P:negative regulation of DNA-templated transcription"/>
    <property type="evidence" value="ECO:0007669"/>
    <property type="project" value="UniProtKB-UniRule"/>
</dbReference>
<dbReference type="HAMAP" id="MF_00440">
    <property type="entry name" value="NrdR"/>
    <property type="match status" value="1"/>
</dbReference>
<dbReference type="InterPro" id="IPR005144">
    <property type="entry name" value="ATP-cone_dom"/>
</dbReference>
<dbReference type="InterPro" id="IPR055173">
    <property type="entry name" value="NrdR-like_N"/>
</dbReference>
<dbReference type="InterPro" id="IPR003796">
    <property type="entry name" value="RNR_NrdR-like"/>
</dbReference>
<dbReference type="NCBIfam" id="TIGR00244">
    <property type="entry name" value="transcriptional regulator NrdR"/>
    <property type="match status" value="1"/>
</dbReference>
<dbReference type="PANTHER" id="PTHR30455">
    <property type="entry name" value="TRANSCRIPTIONAL REPRESSOR NRDR"/>
    <property type="match status" value="1"/>
</dbReference>
<dbReference type="PANTHER" id="PTHR30455:SF2">
    <property type="entry name" value="TRANSCRIPTIONAL REPRESSOR NRDR"/>
    <property type="match status" value="1"/>
</dbReference>
<dbReference type="Pfam" id="PF03477">
    <property type="entry name" value="ATP-cone"/>
    <property type="match status" value="1"/>
</dbReference>
<dbReference type="Pfam" id="PF22811">
    <property type="entry name" value="Zn_ribbon_NrdR"/>
    <property type="match status" value="1"/>
</dbReference>
<dbReference type="PROSITE" id="PS51161">
    <property type="entry name" value="ATP_CONE"/>
    <property type="match status" value="1"/>
</dbReference>
<organism>
    <name type="scientific">Sphingopyxis alaskensis (strain DSM 13593 / LMG 18877 / RB2256)</name>
    <name type="common">Sphingomonas alaskensis</name>
    <dbReference type="NCBI Taxonomy" id="317655"/>
    <lineage>
        <taxon>Bacteria</taxon>
        <taxon>Pseudomonadati</taxon>
        <taxon>Pseudomonadota</taxon>
        <taxon>Alphaproteobacteria</taxon>
        <taxon>Sphingomonadales</taxon>
        <taxon>Sphingomonadaceae</taxon>
        <taxon>Sphingopyxis</taxon>
    </lineage>
</organism>
<evidence type="ECO:0000255" key="1">
    <source>
        <dbReference type="HAMAP-Rule" id="MF_00440"/>
    </source>
</evidence>
<evidence type="ECO:0000256" key="2">
    <source>
        <dbReference type="SAM" id="MobiDB-lite"/>
    </source>
</evidence>
<reference key="1">
    <citation type="journal article" date="2009" name="Proc. Natl. Acad. Sci. U.S.A.">
        <title>The genomic basis of trophic strategy in marine bacteria.</title>
        <authorList>
            <person name="Lauro F.M."/>
            <person name="McDougald D."/>
            <person name="Thomas T."/>
            <person name="Williams T.J."/>
            <person name="Egan S."/>
            <person name="Rice S."/>
            <person name="DeMaere M.Z."/>
            <person name="Ting L."/>
            <person name="Ertan H."/>
            <person name="Johnson J."/>
            <person name="Ferriera S."/>
            <person name="Lapidus A."/>
            <person name="Anderson I."/>
            <person name="Kyrpides N."/>
            <person name="Munk A.C."/>
            <person name="Detter C."/>
            <person name="Han C.S."/>
            <person name="Brown M.V."/>
            <person name="Robb F.T."/>
            <person name="Kjelleberg S."/>
            <person name="Cavicchioli R."/>
        </authorList>
    </citation>
    <scope>NUCLEOTIDE SEQUENCE [LARGE SCALE GENOMIC DNA]</scope>
    <source>
        <strain>DSM 13593 / LMG 18877 / RB2256</strain>
    </source>
</reference>
<protein>
    <recommendedName>
        <fullName evidence="1">Transcriptional repressor NrdR</fullName>
    </recommendedName>
</protein>
<sequence length="155" mass="17696">MRCPYCGHEDSQVKDSRPTEDGAAIRRRRQCEDCGARFTTFERIQLREVVVIKAGGTREPFDREKLMRSVQIACRKRPIDGARIERLVSGIQRQLETSGENEVQASQIGAMVMEALKGFDNVAYIRFASVYRDFTEARDFEEFASTITEAARPIK</sequence>